<geneLocation type="mitochondrion"/>
<organism>
    <name type="scientific">Sibirionetta formosa</name>
    <name type="common">Baikal teal</name>
    <name type="synonym">Anas formosa</name>
    <dbReference type="NCBI Taxonomy" id="56278"/>
    <lineage>
        <taxon>Eukaryota</taxon>
        <taxon>Metazoa</taxon>
        <taxon>Chordata</taxon>
        <taxon>Craniata</taxon>
        <taxon>Vertebrata</taxon>
        <taxon>Euteleostomi</taxon>
        <taxon>Archelosauria</taxon>
        <taxon>Archosauria</taxon>
        <taxon>Dinosauria</taxon>
        <taxon>Saurischia</taxon>
        <taxon>Theropoda</taxon>
        <taxon>Coelurosauria</taxon>
        <taxon>Aves</taxon>
        <taxon>Neognathae</taxon>
        <taxon>Galloanserae</taxon>
        <taxon>Anseriformes</taxon>
        <taxon>Anatidae</taxon>
        <taxon>Anatinae</taxon>
        <taxon>Sibirionetta</taxon>
    </lineage>
</organism>
<keyword id="KW-0249">Electron transport</keyword>
<keyword id="KW-0472">Membrane</keyword>
<keyword id="KW-0496">Mitochondrion</keyword>
<keyword id="KW-0999">Mitochondrion inner membrane</keyword>
<keyword id="KW-0520">NAD</keyword>
<keyword id="KW-0679">Respiratory chain</keyword>
<keyword id="KW-1278">Translocase</keyword>
<keyword id="KW-0812">Transmembrane</keyword>
<keyword id="KW-1133">Transmembrane helix</keyword>
<keyword id="KW-0813">Transport</keyword>
<keyword id="KW-0830">Ubiquinone</keyword>
<feature type="chain" id="PRO_0000117545" description="NADH-ubiquinone oxidoreductase chain 2">
    <location>
        <begin position="1"/>
        <end position="346"/>
    </location>
</feature>
<feature type="transmembrane region" description="Helical" evidence="2">
    <location>
        <begin position="1"/>
        <end position="21"/>
    </location>
</feature>
<feature type="transmembrane region" description="Helical" evidence="2">
    <location>
        <begin position="25"/>
        <end position="45"/>
    </location>
</feature>
<feature type="transmembrane region" description="Helical" evidence="2">
    <location>
        <begin position="60"/>
        <end position="80"/>
    </location>
</feature>
<feature type="transmembrane region" description="Helical" evidence="2">
    <location>
        <begin position="95"/>
        <end position="115"/>
    </location>
</feature>
<feature type="transmembrane region" description="Helical" evidence="2">
    <location>
        <begin position="124"/>
        <end position="144"/>
    </location>
</feature>
<feature type="transmembrane region" description="Helical" evidence="2">
    <location>
        <begin position="149"/>
        <end position="169"/>
    </location>
</feature>
<feature type="transmembrane region" description="Helical" evidence="2">
    <location>
        <begin position="178"/>
        <end position="195"/>
    </location>
</feature>
<feature type="transmembrane region" description="Helical" evidence="2">
    <location>
        <begin position="200"/>
        <end position="219"/>
    </location>
</feature>
<feature type="transmembrane region" description="Helical" evidence="2">
    <location>
        <begin position="242"/>
        <end position="262"/>
    </location>
</feature>
<feature type="transmembrane region" description="Helical" evidence="2">
    <location>
        <begin position="274"/>
        <end position="294"/>
    </location>
</feature>
<feature type="transmembrane region" description="Helical" evidence="2">
    <location>
        <begin position="326"/>
        <end position="346"/>
    </location>
</feature>
<protein>
    <recommendedName>
        <fullName>NADH-ubiquinone oxidoreductase chain 2</fullName>
        <ecNumber>7.1.1.2</ecNumber>
    </recommendedName>
    <alternativeName>
        <fullName>NADH dehydrogenase subunit 2</fullName>
    </alternativeName>
</protein>
<proteinExistence type="inferred from homology"/>
<sequence>MNPHATPVLVLSLALGTTITISSNHWVLAWTGLEINTLAIIPLISKSHHPRAVEAATKYFLTQAAASALVLFSSMTNAWATGQWDITQLNHPTSCLLLTAAIAIKLGLVPFHFWFPEVLQGSPLMTALLLSTLMKFPPLTLLLMTSKSLNPALLTTMALASAALGGWMGLNQTQTRKILAFSSISHLGWIAIILVYNPKLALLTFYLYTIMTSAVFMALNKIKALNLSMILTSWTKTPVLNATLMLVLLSLAGLPPLTGFMPKWLIIQELTKQEMTPAAMAIAMLSLLSLFFYLRLAYHSTITLPPNSSNHMKQWYTSKPPSTPTAILASLSILLLPLSPMIHAIV</sequence>
<comment type="function">
    <text evidence="1">Core subunit of the mitochondrial membrane respiratory chain NADH dehydrogenase (Complex I) that is believed to belong to the minimal assembly required for catalysis. Complex I functions in the transfer of electrons from NADH to the respiratory chain. The immediate electron acceptor for the enzyme is believed to be ubiquinone (By similarity).</text>
</comment>
<comment type="catalytic activity">
    <reaction>
        <text>a ubiquinone + NADH + 5 H(+)(in) = a ubiquinol + NAD(+) + 4 H(+)(out)</text>
        <dbReference type="Rhea" id="RHEA:29091"/>
        <dbReference type="Rhea" id="RHEA-COMP:9565"/>
        <dbReference type="Rhea" id="RHEA-COMP:9566"/>
        <dbReference type="ChEBI" id="CHEBI:15378"/>
        <dbReference type="ChEBI" id="CHEBI:16389"/>
        <dbReference type="ChEBI" id="CHEBI:17976"/>
        <dbReference type="ChEBI" id="CHEBI:57540"/>
        <dbReference type="ChEBI" id="CHEBI:57945"/>
        <dbReference type="EC" id="7.1.1.2"/>
    </reaction>
</comment>
<comment type="subcellular location">
    <subcellularLocation>
        <location>Mitochondrion inner membrane</location>
        <topology>Multi-pass membrane protein</topology>
    </subcellularLocation>
</comment>
<comment type="similarity">
    <text evidence="3">Belongs to the complex I subunit 2 family.</text>
</comment>
<name>NU2M_SIBFO</name>
<evidence type="ECO:0000250" key="1"/>
<evidence type="ECO:0000255" key="2"/>
<evidence type="ECO:0000305" key="3"/>
<dbReference type="EC" id="7.1.1.2"/>
<dbReference type="EMBL" id="AF059133">
    <property type="protein sequence ID" value="AAC14827.1"/>
    <property type="molecule type" value="Genomic_DNA"/>
</dbReference>
<dbReference type="SMR" id="O63775"/>
<dbReference type="GO" id="GO:0005743">
    <property type="term" value="C:mitochondrial inner membrane"/>
    <property type="evidence" value="ECO:0007669"/>
    <property type="project" value="UniProtKB-SubCell"/>
</dbReference>
<dbReference type="GO" id="GO:0008137">
    <property type="term" value="F:NADH dehydrogenase (ubiquinone) activity"/>
    <property type="evidence" value="ECO:0007669"/>
    <property type="project" value="UniProtKB-EC"/>
</dbReference>
<dbReference type="GO" id="GO:0006120">
    <property type="term" value="P:mitochondrial electron transport, NADH to ubiquinone"/>
    <property type="evidence" value="ECO:0007669"/>
    <property type="project" value="InterPro"/>
</dbReference>
<dbReference type="InterPro" id="IPR050175">
    <property type="entry name" value="Complex_I_Subunit_2"/>
</dbReference>
<dbReference type="InterPro" id="IPR010933">
    <property type="entry name" value="NADH_DH_su2_C"/>
</dbReference>
<dbReference type="InterPro" id="IPR003917">
    <property type="entry name" value="NADH_UbQ_OxRdtase_chain2"/>
</dbReference>
<dbReference type="InterPro" id="IPR001750">
    <property type="entry name" value="ND/Mrp_TM"/>
</dbReference>
<dbReference type="PANTHER" id="PTHR46552">
    <property type="entry name" value="NADH-UBIQUINONE OXIDOREDUCTASE CHAIN 2"/>
    <property type="match status" value="1"/>
</dbReference>
<dbReference type="PANTHER" id="PTHR46552:SF1">
    <property type="entry name" value="NADH-UBIQUINONE OXIDOREDUCTASE CHAIN 2"/>
    <property type="match status" value="1"/>
</dbReference>
<dbReference type="Pfam" id="PF06444">
    <property type="entry name" value="NADH_dehy_S2_C"/>
    <property type="match status" value="1"/>
</dbReference>
<dbReference type="Pfam" id="PF00361">
    <property type="entry name" value="Proton_antipo_M"/>
    <property type="match status" value="1"/>
</dbReference>
<dbReference type="PRINTS" id="PR01436">
    <property type="entry name" value="NADHDHGNASE2"/>
</dbReference>
<accession>O63775</accession>
<reference key="1">
    <citation type="journal article" date="1998" name="Mol. Phylogenet. Evol.">
        <title>Comparing molecular evolution in two mitochondrial protein coding genes (cytochrome b and ND2) in the dabbling ducks (Tribe: Anatini).</title>
        <authorList>
            <person name="Johnson K.P."/>
            <person name="Sorenson M.D."/>
        </authorList>
    </citation>
    <scope>NUCLEOTIDE SEQUENCE [GENOMIC DNA]</scope>
</reference>
<gene>
    <name type="primary">MT-ND2</name>
    <name type="synonym">MTND2</name>
    <name type="synonym">NADH2</name>
    <name type="synonym">ND2</name>
</gene>